<feature type="signal peptide" evidence="1">
    <location>
        <begin position="1"/>
        <end position="18"/>
    </location>
</feature>
<feature type="propeptide" id="PRO_0000002042" evidence="4">
    <location>
        <begin position="19"/>
        <end position="23"/>
    </location>
</feature>
<feature type="chain" id="PRO_0000002043" description="Apolipophorin-3">
    <location>
        <begin position="24"/>
        <end position="186"/>
    </location>
</feature>
<proteinExistence type="evidence at protein level"/>
<comment type="function">
    <text evidence="2">Assists in the loading of diacylglycerol, generated from triacylglycerol stores in the fat body through the action of adipokinetic hormone, into lipophorin, the hemolymph lipoprotein. It increases the lipid carrying capacity of lipophorin by covering the expanding hydrophobic surface resulting from diacylglycerol uptake. It thus plays a critical role in the transport of lipids during flight in several species of insects. Has antibacterial activity against the Gram-positive bacteria L.monocytogenes (MIC=6.5 uM). Lacks antibacterial activity against the Gram-positive bacteria B.circulans, M.luteus, S.aureus, and S.lutea, and the Gram-negative bacteria E.coli D31, E.coli ATCC 25922, and S.typhimurium. Lacks antifungal activity against S.cerevisiae, P.pastoris, Z.marxianus, C.albicans, C.wickerhamii, A.niger, F.oxysporum, and T.harizianum.</text>
</comment>
<comment type="subunit">
    <text>Equilibrium between a soluble monomer and a bound lipoprotein form. Apolipophorin-3 associates with lipophorin during lipid loading until each particle contains 9 or 14 molecules of apolipophorin-3.</text>
</comment>
<comment type="subcellular location">
    <subcellularLocation>
        <location evidence="2 3">Secreted</location>
    </subcellularLocation>
    <text evidence="3">Secreted into hemolymph.</text>
</comment>
<comment type="tissue specificity">
    <text evidence="2 3">Expressed in hemolymph (PubMed:17194500, PubMed:29289504). Also found in hemocytes and fat body (PubMed:29289504).</text>
</comment>
<comment type="induction">
    <text evidence="2">By bacterial infection.</text>
</comment>
<comment type="similarity">
    <text evidence="5">Belongs to the insect apolipophorin-3 family.</text>
</comment>
<comment type="online information" name="Protein Spotlight">
    <link uri="https://www.proteinspotlight.org/back_issues/059"/>
    <text>Lipid freight - Issue 59 of June 2005</text>
</comment>
<name>APLP3_GALME</name>
<sequence length="186" mass="20453">MAAKYVFVVAACSALAQAGIVRRDASTPLQDLEKHAAEFQKTFSEQLNAFTNSKDTKEFNTALKEGSDSVLQQLNALASSLQKALNDANGKAKEALEQTRTNLERTAEELRRAHPDVERQAGALRDRLQTAVQATVQETQKLAKTVGANLEETNKKLAPQIKSAYDDFVKQAQEVQKKLHEAASKQ</sequence>
<dbReference type="EMBL" id="AJ006975">
    <property type="protein sequence ID" value="CAA07363.1"/>
    <property type="molecule type" value="mRNA"/>
</dbReference>
<dbReference type="PIR" id="T09296">
    <property type="entry name" value="T09296"/>
</dbReference>
<dbReference type="SMR" id="P80703"/>
<dbReference type="Allergome" id="3638">
    <property type="allergen name" value="Gal m 24kD"/>
</dbReference>
<dbReference type="InParanoid" id="P80703"/>
<dbReference type="Proteomes" id="UP000504614">
    <property type="component" value="Unplaced"/>
</dbReference>
<dbReference type="GO" id="GO:0005615">
    <property type="term" value="C:extracellular space"/>
    <property type="evidence" value="ECO:0000314"/>
    <property type="project" value="UniProtKB"/>
</dbReference>
<dbReference type="GO" id="GO:0008289">
    <property type="term" value="F:lipid binding"/>
    <property type="evidence" value="ECO:0007669"/>
    <property type="project" value="InterPro"/>
</dbReference>
<dbReference type="GO" id="GO:0050830">
    <property type="term" value="P:defense response to Gram-positive bacterium"/>
    <property type="evidence" value="ECO:0000314"/>
    <property type="project" value="UniProtKB"/>
</dbReference>
<dbReference type="GO" id="GO:0045087">
    <property type="term" value="P:innate immune response"/>
    <property type="evidence" value="ECO:0000314"/>
    <property type="project" value="UniProtKB"/>
</dbReference>
<dbReference type="GO" id="GO:0006869">
    <property type="term" value="P:lipid transport"/>
    <property type="evidence" value="ECO:0007669"/>
    <property type="project" value="UniProtKB-KW"/>
</dbReference>
<dbReference type="CDD" id="cd13769">
    <property type="entry name" value="ApoLp-III_like"/>
    <property type="match status" value="1"/>
</dbReference>
<dbReference type="Gene3D" id="1.20.120.20">
    <property type="entry name" value="Apolipoprotein"/>
    <property type="match status" value="1"/>
</dbReference>
<dbReference type="InterPro" id="IPR010009">
    <property type="entry name" value="ApoLp-III"/>
</dbReference>
<dbReference type="Pfam" id="PF07464">
    <property type="entry name" value="ApoLp-III"/>
    <property type="match status" value="1"/>
</dbReference>
<dbReference type="SUPFAM" id="SSF47857">
    <property type="entry name" value="Apolipophorin-III"/>
    <property type="match status" value="1"/>
</dbReference>
<reference key="1">
    <citation type="submission" date="1998-06" db="EMBL/GenBank/DDBJ databases">
        <title>Functional expression of Galleria mellonella apolipophorin III.</title>
        <authorList>
            <person name="Niere M."/>
            <person name="Dettloff M."/>
            <person name="Weise C."/>
            <person name="Meisslitzer C."/>
            <person name="Ziegler M."/>
            <person name="Wiesner A."/>
        </authorList>
    </citation>
    <scope>NUCLEOTIDE SEQUENCE [MRNA]</scope>
    <source>
        <tissue>Fat body</tissue>
    </source>
</reference>
<reference key="2">
    <citation type="journal article" date="1998" name="J. Protein Chem.">
        <title>Primary structure of apolipophorin-III from the greater wax moth, Galleria mellonella.</title>
        <authorList>
            <person name="Weise C."/>
            <person name="Franke P."/>
            <person name="Kopacek P."/>
            <person name="Wiesner A."/>
        </authorList>
    </citation>
    <scope>PROTEIN SEQUENCE OF 24-186</scope>
    <source>
        <tissue>Hemolymph</tissue>
    </source>
</reference>
<reference key="3">
    <citation type="journal article" date="2007" name="Peptides">
        <title>Purification and characterization of eight peptides from Galleria mellonella immune hemolymph.</title>
        <authorList>
            <person name="Cytrynska M."/>
            <person name="Mak P."/>
            <person name="Zdybicka-Barabas A."/>
            <person name="Suder P."/>
            <person name="Jakubowicz T."/>
        </authorList>
    </citation>
    <scope>PROTEIN SEQUENCE OF 136-186</scope>
    <scope>FUNCTION</scope>
    <scope>SUBCELLULAR LOCATION</scope>
    <scope>TISSUE SPECIFICITY</scope>
    <scope>INDUCTION</scope>
    <source>
        <tissue>Larval hemolymph</tissue>
    </source>
</reference>
<reference key="4">
    <citation type="journal article" date="2017" name="J. Insect Physiol.">
        <title>Studies on localization and protein ligands of Galleria mellonella apolipophorin III during immune response against different pathogens.</title>
        <authorList>
            <person name="Staczek S."/>
            <person name="Zdybicka-Barabas A."/>
            <person name="Mak P."/>
            <person name="Sowa-Jasilek A."/>
            <person name="Kedracka-Krok S."/>
            <person name="Jankowska U."/>
            <person name="Suder P."/>
            <person name="Wydrych J."/>
            <person name="Grygorczuk K."/>
            <person name="Jakubowicz T."/>
            <person name="Cytrynska M."/>
        </authorList>
    </citation>
    <scope>SUBCELLULAR LOCATION</scope>
    <scope>TISSUE SPECIFICITY</scope>
</reference>
<organism>
    <name type="scientific">Galleria mellonella</name>
    <name type="common">Greater wax moth</name>
    <dbReference type="NCBI Taxonomy" id="7137"/>
    <lineage>
        <taxon>Eukaryota</taxon>
        <taxon>Metazoa</taxon>
        <taxon>Ecdysozoa</taxon>
        <taxon>Arthropoda</taxon>
        <taxon>Hexapoda</taxon>
        <taxon>Insecta</taxon>
        <taxon>Pterygota</taxon>
        <taxon>Neoptera</taxon>
        <taxon>Endopterygota</taxon>
        <taxon>Lepidoptera</taxon>
        <taxon>Glossata</taxon>
        <taxon>Ditrysia</taxon>
        <taxon>Pyraloidea</taxon>
        <taxon>Pyralidae</taxon>
        <taxon>Galleriinae</taxon>
        <taxon>Galleria</taxon>
    </lineage>
</organism>
<accession>P80703</accession>
<accession>O76946</accession>
<keyword id="KW-0044">Antibiotic</keyword>
<keyword id="KW-0929">Antimicrobial</keyword>
<keyword id="KW-0165">Cleavage on pair of basic residues</keyword>
<keyword id="KW-0903">Direct protein sequencing</keyword>
<keyword id="KW-0391">Immunity</keyword>
<keyword id="KW-0399">Innate immunity</keyword>
<keyword id="KW-0445">Lipid transport</keyword>
<keyword id="KW-1185">Reference proteome</keyword>
<keyword id="KW-0964">Secreted</keyword>
<keyword id="KW-0732">Signal</keyword>
<keyword id="KW-0813">Transport</keyword>
<protein>
    <recommendedName>
        <fullName>Apolipophorin-3</fullName>
    </recommendedName>
    <alternativeName>
        <fullName>Apolipophorin-III</fullName>
        <shortName>ApoLp-III</shortName>
    </alternativeName>
</protein>
<evidence type="ECO:0000255" key="1"/>
<evidence type="ECO:0000269" key="2">
    <source>
    </source>
</evidence>
<evidence type="ECO:0000269" key="3">
    <source>
    </source>
</evidence>
<evidence type="ECO:0000269" key="4">
    <source>
    </source>
</evidence>
<evidence type="ECO:0000305" key="5"/>